<keyword id="KW-0067">ATP-binding</keyword>
<keyword id="KW-0143">Chaperone</keyword>
<keyword id="KW-0963">Cytoplasm</keyword>
<keyword id="KW-0547">Nucleotide-binding</keyword>
<keyword id="KW-0346">Stress response</keyword>
<sequence>MKKQFDTEVNDLLYLIIHSLYSHKEIFLRELISNASDAIDKLKFLSLTNEKFKNIALEPKIEITFDDKSILIKDNGIGMNEQDLTNHLGVIAKSGTKEFINNLKQDEKKSASLIGQFGVGFYSAFIVSEKVEVTSKKALESDAYIWFSDGKTGYEIEKAKKEESGTEIKLYLNKEGLEYANKWKIQEIIKKYSNHINYPIYIKYSEPIMKDGKQEGIEEKEEKLNETTALWTKNKSEIKAEEYNEFYKNTTFDYENPLMHVHTKAEGNLEYTNLFYIPSKAPYDLYYPNTKPGVKLFINRIFITDSEGSLLPNYLRFIKGIIDCQDLPLNVSREILQQNKILSKIKSSSVKKILSELEKLSKKNPEKFSKFSKEFGRCIKEGVYSDFENREKLISLIRFKSSSVDGFVSFKEYKERMKESQKSIYYITGGKENILKENPIVSAYKEKGFEILIMDDELDEAILNLIPEYEGLKLKAINKNETSNELKDENFKKIEEEFKDILTKVKEILKDHIKEVNLSATLIKEPSAIIVDSNDPTYQMQKIMLSMGQEVKEIKPILELNPNNKIVQNLKNLESEKLEKISILLFEEALLTSGMPSKNPGKFINIINEFLEKELL</sequence>
<proteinExistence type="inferred from homology"/>
<accession>Q660W4</accession>
<feature type="chain" id="PRO_0000224198" description="Chaperone protein HtpG">
    <location>
        <begin position="1"/>
        <end position="616"/>
    </location>
</feature>
<feature type="region of interest" description="A; substrate-binding" evidence="1">
    <location>
        <begin position="1"/>
        <end position="333"/>
    </location>
</feature>
<feature type="region of interest" description="B" evidence="1">
    <location>
        <begin position="334"/>
        <end position="542"/>
    </location>
</feature>
<feature type="region of interest" description="C" evidence="1">
    <location>
        <begin position="543"/>
        <end position="616"/>
    </location>
</feature>
<dbReference type="EMBL" id="CP000013">
    <property type="protein sequence ID" value="AAU07407.1"/>
    <property type="molecule type" value="Genomic_DNA"/>
</dbReference>
<dbReference type="RefSeq" id="WP_011193867.1">
    <property type="nucleotide sequence ID" value="NZ_CP028872.1"/>
</dbReference>
<dbReference type="SMR" id="Q660W4"/>
<dbReference type="GeneID" id="45161351"/>
<dbReference type="KEGG" id="bga:BG0570"/>
<dbReference type="eggNOG" id="COG0326">
    <property type="taxonomic scope" value="Bacteria"/>
</dbReference>
<dbReference type="HOGENOM" id="CLU_006684_3_0_12"/>
<dbReference type="OrthoDB" id="9802640at2"/>
<dbReference type="Proteomes" id="UP000002276">
    <property type="component" value="Chromosome"/>
</dbReference>
<dbReference type="GO" id="GO:0005737">
    <property type="term" value="C:cytoplasm"/>
    <property type="evidence" value="ECO:0007669"/>
    <property type="project" value="UniProtKB-SubCell"/>
</dbReference>
<dbReference type="GO" id="GO:0005524">
    <property type="term" value="F:ATP binding"/>
    <property type="evidence" value="ECO:0007669"/>
    <property type="project" value="UniProtKB-UniRule"/>
</dbReference>
<dbReference type="GO" id="GO:0016887">
    <property type="term" value="F:ATP hydrolysis activity"/>
    <property type="evidence" value="ECO:0007669"/>
    <property type="project" value="InterPro"/>
</dbReference>
<dbReference type="GO" id="GO:0140662">
    <property type="term" value="F:ATP-dependent protein folding chaperone"/>
    <property type="evidence" value="ECO:0007669"/>
    <property type="project" value="InterPro"/>
</dbReference>
<dbReference type="GO" id="GO:0051082">
    <property type="term" value="F:unfolded protein binding"/>
    <property type="evidence" value="ECO:0007669"/>
    <property type="project" value="UniProtKB-UniRule"/>
</dbReference>
<dbReference type="CDD" id="cd16927">
    <property type="entry name" value="HATPase_Hsp90-like"/>
    <property type="match status" value="1"/>
</dbReference>
<dbReference type="FunFam" id="3.30.230.80:FF:000002">
    <property type="entry name" value="Molecular chaperone HtpG"/>
    <property type="match status" value="1"/>
</dbReference>
<dbReference type="FunFam" id="3.30.565.10:FF:000009">
    <property type="entry name" value="Molecular chaperone HtpG"/>
    <property type="match status" value="1"/>
</dbReference>
<dbReference type="Gene3D" id="3.30.230.80">
    <property type="match status" value="1"/>
</dbReference>
<dbReference type="Gene3D" id="3.40.50.11260">
    <property type="match status" value="1"/>
</dbReference>
<dbReference type="Gene3D" id="1.20.120.790">
    <property type="entry name" value="Heat shock protein 90, C-terminal domain"/>
    <property type="match status" value="1"/>
</dbReference>
<dbReference type="Gene3D" id="3.30.565.10">
    <property type="entry name" value="Histidine kinase-like ATPase, C-terminal domain"/>
    <property type="match status" value="1"/>
</dbReference>
<dbReference type="HAMAP" id="MF_00505">
    <property type="entry name" value="HSP90"/>
    <property type="match status" value="1"/>
</dbReference>
<dbReference type="InterPro" id="IPR036890">
    <property type="entry name" value="HATPase_C_sf"/>
</dbReference>
<dbReference type="InterPro" id="IPR019805">
    <property type="entry name" value="Heat_shock_protein_90_CS"/>
</dbReference>
<dbReference type="InterPro" id="IPR037196">
    <property type="entry name" value="HSP90_C"/>
</dbReference>
<dbReference type="InterPro" id="IPR001404">
    <property type="entry name" value="Hsp90_fam"/>
</dbReference>
<dbReference type="InterPro" id="IPR020575">
    <property type="entry name" value="Hsp90_N"/>
</dbReference>
<dbReference type="InterPro" id="IPR020568">
    <property type="entry name" value="Ribosomal_Su5_D2-typ_SF"/>
</dbReference>
<dbReference type="NCBIfam" id="NF003555">
    <property type="entry name" value="PRK05218.1"/>
    <property type="match status" value="1"/>
</dbReference>
<dbReference type="PANTHER" id="PTHR11528">
    <property type="entry name" value="HEAT SHOCK PROTEIN 90 FAMILY MEMBER"/>
    <property type="match status" value="1"/>
</dbReference>
<dbReference type="Pfam" id="PF13589">
    <property type="entry name" value="HATPase_c_3"/>
    <property type="match status" value="1"/>
</dbReference>
<dbReference type="Pfam" id="PF00183">
    <property type="entry name" value="HSP90"/>
    <property type="match status" value="1"/>
</dbReference>
<dbReference type="PIRSF" id="PIRSF002583">
    <property type="entry name" value="Hsp90"/>
    <property type="match status" value="1"/>
</dbReference>
<dbReference type="PRINTS" id="PR00775">
    <property type="entry name" value="HEATSHOCK90"/>
</dbReference>
<dbReference type="SMART" id="SM00387">
    <property type="entry name" value="HATPase_c"/>
    <property type="match status" value="1"/>
</dbReference>
<dbReference type="SUPFAM" id="SSF55874">
    <property type="entry name" value="ATPase domain of HSP90 chaperone/DNA topoisomerase II/histidine kinase"/>
    <property type="match status" value="1"/>
</dbReference>
<dbReference type="SUPFAM" id="SSF110942">
    <property type="entry name" value="HSP90 C-terminal domain"/>
    <property type="match status" value="1"/>
</dbReference>
<dbReference type="SUPFAM" id="SSF54211">
    <property type="entry name" value="Ribosomal protein S5 domain 2-like"/>
    <property type="match status" value="1"/>
</dbReference>
<dbReference type="PROSITE" id="PS00298">
    <property type="entry name" value="HSP90"/>
    <property type="match status" value="1"/>
</dbReference>
<reference key="1">
    <citation type="journal article" date="2004" name="Nucleic Acids Res.">
        <title>Comparative analysis of the Borrelia garinii genome.</title>
        <authorList>
            <person name="Gloeckner G."/>
            <person name="Lehmann R."/>
            <person name="Romualdi A."/>
            <person name="Pradella S."/>
            <person name="Schulte-Spechtel U."/>
            <person name="Schilhabel M."/>
            <person name="Wilske B."/>
            <person name="Suehnel J."/>
            <person name="Platzer M."/>
        </authorList>
    </citation>
    <scope>NUCLEOTIDE SEQUENCE [LARGE SCALE GENOMIC DNA]</scope>
    <source>
        <strain>ATCC BAA-2496 / DSM 23469 / PBi</strain>
    </source>
</reference>
<evidence type="ECO:0000255" key="1">
    <source>
        <dbReference type="HAMAP-Rule" id="MF_00505"/>
    </source>
</evidence>
<organism>
    <name type="scientific">Borrelia garinii subsp. bavariensis (strain ATCC BAA-2496 / DSM 23469 / PBi)</name>
    <name type="common">Borreliella bavariensis</name>
    <dbReference type="NCBI Taxonomy" id="290434"/>
    <lineage>
        <taxon>Bacteria</taxon>
        <taxon>Pseudomonadati</taxon>
        <taxon>Spirochaetota</taxon>
        <taxon>Spirochaetia</taxon>
        <taxon>Spirochaetales</taxon>
        <taxon>Borreliaceae</taxon>
        <taxon>Borreliella</taxon>
    </lineage>
</organism>
<gene>
    <name evidence="1" type="primary">htpG</name>
    <name type="ordered locus">BG0570</name>
</gene>
<name>HTPG_BORGP</name>
<comment type="function">
    <text evidence="1">Molecular chaperone. Has ATPase activity.</text>
</comment>
<comment type="subunit">
    <text evidence="1">Homodimer.</text>
</comment>
<comment type="subcellular location">
    <subcellularLocation>
        <location evidence="1">Cytoplasm</location>
    </subcellularLocation>
</comment>
<comment type="similarity">
    <text evidence="1">Belongs to the heat shock protein 90 family.</text>
</comment>
<protein>
    <recommendedName>
        <fullName evidence="1">Chaperone protein HtpG</fullName>
    </recommendedName>
    <alternativeName>
        <fullName evidence="1">Heat shock protein HtpG</fullName>
    </alternativeName>
    <alternativeName>
        <fullName evidence="1">High temperature protein G</fullName>
    </alternativeName>
</protein>